<evidence type="ECO:0000255" key="1">
    <source>
        <dbReference type="HAMAP-Rule" id="MF_00036"/>
    </source>
</evidence>
<reference key="1">
    <citation type="journal article" date="2003" name="Proc. Natl. Acad. Sci. U.S.A.">
        <title>The complete genome sequence of the carcinogenic bacterium Helicobacter hepaticus.</title>
        <authorList>
            <person name="Suerbaum S."/>
            <person name="Josenhans C."/>
            <person name="Sterzenbach T."/>
            <person name="Drescher B."/>
            <person name="Brandt P."/>
            <person name="Bell M."/>
            <person name="Droege M."/>
            <person name="Fartmann B."/>
            <person name="Fischer H.-P."/>
            <person name="Ge Z."/>
            <person name="Hoerster A."/>
            <person name="Holland R."/>
            <person name="Klein K."/>
            <person name="Koenig J."/>
            <person name="Macko L."/>
            <person name="Mendz G.L."/>
            <person name="Nyakatura G."/>
            <person name="Schauer D.B."/>
            <person name="Shen Z."/>
            <person name="Weber J."/>
            <person name="Frosch M."/>
            <person name="Fox J.G."/>
        </authorList>
    </citation>
    <scope>NUCLEOTIDE SEQUENCE [LARGE SCALE GENOMIC DNA]</scope>
    <source>
        <strain>ATCC 51449 / 3B1</strain>
    </source>
</reference>
<accession>Q7VHV4</accession>
<sequence length="892" mass="100105">MAQYDIRKQYLDFFASKSHKVYDSMPLVPDDASLLFTNAGMVQFKDIFTGKIPIPAPPRATSSQLCIRAGGKHNDLENVGYTARHHTLFEMLGNFSFGDYFKKEAIAYAWEFVTQVLGFSKDVLYVTIHESDDEAYELWCEHIEPSRIKRMGDKDNFWQMGDSGPCGPCSEIYVDQGEKYFQSDEDYFGGEGDRFLEIWNLVFMQFEQKGGVRTLLPKPSIDTGMGLERVIALKEGKINNFDTSLFAPLMQCLQKLTNKTYFGDDEIFDRLDLQEAEMIKIKNIQASFRVIADHARSVAFLLAQGVNFDKEGRGYVLRRILRRAVRHGYLLGLKKPFLWQVVEVVCESMGVHYSYLQERKRAIKEQCKNEEERFFETIESGMTLFSTELEKLQSAVQTQKQEILFSGEVAFKLYDTYGFPLDLTQDMLRERHIQVDMQAFEQCMNEQKSRSKASWKGSGDALKEGDFNALLSKFGENKFVGYESNKETCKIKALLDSQFKMVDTLSPSSQGWVMLDKTPFYPESGGPVGDKGALYSTNRILQSAQAQKFAQVLDTQKFFGLNLSQIEALSALKVGQEVFAEVDSIRFEIAKHHSATHLLHLALRTILGSHIAQAGSLVQPHRLRFDFSHPKALTNEEITHIENLVNEQILQSNAQLCENMDMQQAKAKGAMALFGEKYGERVRVVSFGDSIELCGGIHVNNTAEIGSFYIVKESGVSSGVRRIEAVCGNAAYHYGKNALLELSRARESLKAQDVLQGIEKIKMQLNEAKEKANKAKQSVKSLDYEEINGVRLIVLKLDSVSANEAKEIIDRSKNENESVAILLLSESNNKISIVAGVKNAPLKAGAWVKQVAQELGGNGGGRDDFATAGGKDIDKISQALNLAKDIATKALQ</sequence>
<name>SYA_HELHP</name>
<organism>
    <name type="scientific">Helicobacter hepaticus (strain ATCC 51449 / 3B1)</name>
    <dbReference type="NCBI Taxonomy" id="235279"/>
    <lineage>
        <taxon>Bacteria</taxon>
        <taxon>Pseudomonadati</taxon>
        <taxon>Campylobacterota</taxon>
        <taxon>Epsilonproteobacteria</taxon>
        <taxon>Campylobacterales</taxon>
        <taxon>Helicobacteraceae</taxon>
        <taxon>Helicobacter</taxon>
    </lineage>
</organism>
<gene>
    <name evidence="1" type="primary">alaS</name>
    <name type="ordered locus">HH_0859</name>
</gene>
<comment type="function">
    <text evidence="1">Catalyzes the attachment of alanine to tRNA(Ala) in a two-step reaction: alanine is first activated by ATP to form Ala-AMP and then transferred to the acceptor end of tRNA(Ala). Also edits incorrectly charged Ser-tRNA(Ala) and Gly-tRNA(Ala) via its editing domain.</text>
</comment>
<comment type="catalytic activity">
    <reaction evidence="1">
        <text>tRNA(Ala) + L-alanine + ATP = L-alanyl-tRNA(Ala) + AMP + diphosphate</text>
        <dbReference type="Rhea" id="RHEA:12540"/>
        <dbReference type="Rhea" id="RHEA-COMP:9657"/>
        <dbReference type="Rhea" id="RHEA-COMP:9923"/>
        <dbReference type="ChEBI" id="CHEBI:30616"/>
        <dbReference type="ChEBI" id="CHEBI:33019"/>
        <dbReference type="ChEBI" id="CHEBI:57972"/>
        <dbReference type="ChEBI" id="CHEBI:78442"/>
        <dbReference type="ChEBI" id="CHEBI:78497"/>
        <dbReference type="ChEBI" id="CHEBI:456215"/>
        <dbReference type="EC" id="6.1.1.7"/>
    </reaction>
</comment>
<comment type="cofactor">
    <cofactor evidence="1">
        <name>Zn(2+)</name>
        <dbReference type="ChEBI" id="CHEBI:29105"/>
    </cofactor>
    <text evidence="1">Binds 1 zinc ion per subunit.</text>
</comment>
<comment type="subcellular location">
    <subcellularLocation>
        <location evidence="1">Cytoplasm</location>
    </subcellularLocation>
</comment>
<comment type="domain">
    <text evidence="1">Consists of three domains; the N-terminal catalytic domain, the editing domain and the C-terminal C-Ala domain. The editing domain removes incorrectly charged amino acids, while the C-Ala domain, along with tRNA(Ala), serves as a bridge to cooperatively bring together the editing and aminoacylation centers thus stimulating deacylation of misacylated tRNAs.</text>
</comment>
<comment type="similarity">
    <text evidence="1">Belongs to the class-II aminoacyl-tRNA synthetase family.</text>
</comment>
<keyword id="KW-0030">Aminoacyl-tRNA synthetase</keyword>
<keyword id="KW-0067">ATP-binding</keyword>
<keyword id="KW-0963">Cytoplasm</keyword>
<keyword id="KW-0436">Ligase</keyword>
<keyword id="KW-0479">Metal-binding</keyword>
<keyword id="KW-0547">Nucleotide-binding</keyword>
<keyword id="KW-0648">Protein biosynthesis</keyword>
<keyword id="KW-1185">Reference proteome</keyword>
<keyword id="KW-0694">RNA-binding</keyword>
<keyword id="KW-0820">tRNA-binding</keyword>
<keyword id="KW-0862">Zinc</keyword>
<proteinExistence type="inferred from homology"/>
<dbReference type="EC" id="6.1.1.7" evidence="1"/>
<dbReference type="EMBL" id="AE017125">
    <property type="protein sequence ID" value="AAP77456.1"/>
    <property type="molecule type" value="Genomic_DNA"/>
</dbReference>
<dbReference type="RefSeq" id="WP_011115699.1">
    <property type="nucleotide sequence ID" value="NC_004917.1"/>
</dbReference>
<dbReference type="SMR" id="Q7VHV4"/>
<dbReference type="STRING" id="235279.HH_0859"/>
<dbReference type="KEGG" id="hhe:HH_0859"/>
<dbReference type="eggNOG" id="COG0013">
    <property type="taxonomic scope" value="Bacteria"/>
</dbReference>
<dbReference type="HOGENOM" id="CLU_004485_1_1_7"/>
<dbReference type="OrthoDB" id="9803884at2"/>
<dbReference type="Proteomes" id="UP000002495">
    <property type="component" value="Chromosome"/>
</dbReference>
<dbReference type="GO" id="GO:0005829">
    <property type="term" value="C:cytosol"/>
    <property type="evidence" value="ECO:0007669"/>
    <property type="project" value="TreeGrafter"/>
</dbReference>
<dbReference type="GO" id="GO:0004813">
    <property type="term" value="F:alanine-tRNA ligase activity"/>
    <property type="evidence" value="ECO:0007669"/>
    <property type="project" value="UniProtKB-UniRule"/>
</dbReference>
<dbReference type="GO" id="GO:0002161">
    <property type="term" value="F:aminoacyl-tRNA deacylase activity"/>
    <property type="evidence" value="ECO:0007669"/>
    <property type="project" value="TreeGrafter"/>
</dbReference>
<dbReference type="GO" id="GO:0005524">
    <property type="term" value="F:ATP binding"/>
    <property type="evidence" value="ECO:0007669"/>
    <property type="project" value="UniProtKB-UniRule"/>
</dbReference>
<dbReference type="GO" id="GO:0000049">
    <property type="term" value="F:tRNA binding"/>
    <property type="evidence" value="ECO:0007669"/>
    <property type="project" value="UniProtKB-KW"/>
</dbReference>
<dbReference type="GO" id="GO:0008270">
    <property type="term" value="F:zinc ion binding"/>
    <property type="evidence" value="ECO:0007669"/>
    <property type="project" value="UniProtKB-UniRule"/>
</dbReference>
<dbReference type="GO" id="GO:0006419">
    <property type="term" value="P:alanyl-tRNA aminoacylation"/>
    <property type="evidence" value="ECO:0007669"/>
    <property type="project" value="UniProtKB-UniRule"/>
</dbReference>
<dbReference type="GO" id="GO:0045892">
    <property type="term" value="P:negative regulation of DNA-templated transcription"/>
    <property type="evidence" value="ECO:0007669"/>
    <property type="project" value="TreeGrafter"/>
</dbReference>
<dbReference type="CDD" id="cd00673">
    <property type="entry name" value="AlaRS_core"/>
    <property type="match status" value="1"/>
</dbReference>
<dbReference type="FunFam" id="3.10.310.40:FF:000001">
    <property type="entry name" value="Alanine--tRNA ligase"/>
    <property type="match status" value="1"/>
</dbReference>
<dbReference type="FunFam" id="3.30.54.20:FF:000001">
    <property type="entry name" value="Alanine--tRNA ligase"/>
    <property type="match status" value="1"/>
</dbReference>
<dbReference type="FunFam" id="3.30.930.10:FF:000004">
    <property type="entry name" value="Alanine--tRNA ligase"/>
    <property type="match status" value="1"/>
</dbReference>
<dbReference type="FunFam" id="3.30.980.10:FF:000004">
    <property type="entry name" value="Alanine--tRNA ligase, cytoplasmic"/>
    <property type="match status" value="1"/>
</dbReference>
<dbReference type="Gene3D" id="2.40.30.130">
    <property type="match status" value="1"/>
</dbReference>
<dbReference type="Gene3D" id="3.10.310.40">
    <property type="match status" value="1"/>
</dbReference>
<dbReference type="Gene3D" id="3.30.54.20">
    <property type="match status" value="1"/>
</dbReference>
<dbReference type="Gene3D" id="3.30.930.10">
    <property type="entry name" value="Bira Bifunctional Protein, Domain 2"/>
    <property type="match status" value="1"/>
</dbReference>
<dbReference type="Gene3D" id="3.30.980.10">
    <property type="entry name" value="Threonyl-trna Synthetase, Chain A, domain 2"/>
    <property type="match status" value="1"/>
</dbReference>
<dbReference type="HAMAP" id="MF_00036_B">
    <property type="entry name" value="Ala_tRNA_synth_B"/>
    <property type="match status" value="1"/>
</dbReference>
<dbReference type="InterPro" id="IPR045864">
    <property type="entry name" value="aa-tRNA-synth_II/BPL/LPL"/>
</dbReference>
<dbReference type="InterPro" id="IPR002318">
    <property type="entry name" value="Ala-tRNA-lgiase_IIc"/>
</dbReference>
<dbReference type="InterPro" id="IPR018162">
    <property type="entry name" value="Ala-tRNA-ligase_IIc_anticod-bd"/>
</dbReference>
<dbReference type="InterPro" id="IPR018165">
    <property type="entry name" value="Ala-tRNA-synth_IIc_core"/>
</dbReference>
<dbReference type="InterPro" id="IPR018164">
    <property type="entry name" value="Ala-tRNA-synth_IIc_N"/>
</dbReference>
<dbReference type="InterPro" id="IPR050058">
    <property type="entry name" value="Ala-tRNA_ligase"/>
</dbReference>
<dbReference type="InterPro" id="IPR023033">
    <property type="entry name" value="Ala_tRNA_ligase_euk/bac"/>
</dbReference>
<dbReference type="InterPro" id="IPR003156">
    <property type="entry name" value="DHHA1_dom"/>
</dbReference>
<dbReference type="InterPro" id="IPR018163">
    <property type="entry name" value="Thr/Ala-tRNA-synth_IIc_edit"/>
</dbReference>
<dbReference type="InterPro" id="IPR009000">
    <property type="entry name" value="Transl_B-barrel_sf"/>
</dbReference>
<dbReference type="InterPro" id="IPR012947">
    <property type="entry name" value="tRNA_SAD"/>
</dbReference>
<dbReference type="NCBIfam" id="TIGR00344">
    <property type="entry name" value="alaS"/>
    <property type="match status" value="1"/>
</dbReference>
<dbReference type="PANTHER" id="PTHR11777:SF9">
    <property type="entry name" value="ALANINE--TRNA LIGASE, CYTOPLASMIC"/>
    <property type="match status" value="1"/>
</dbReference>
<dbReference type="PANTHER" id="PTHR11777">
    <property type="entry name" value="ALANYL-TRNA SYNTHETASE"/>
    <property type="match status" value="1"/>
</dbReference>
<dbReference type="Pfam" id="PF02272">
    <property type="entry name" value="DHHA1"/>
    <property type="match status" value="1"/>
</dbReference>
<dbReference type="Pfam" id="PF01411">
    <property type="entry name" value="tRNA-synt_2c"/>
    <property type="match status" value="1"/>
</dbReference>
<dbReference type="Pfam" id="PF07973">
    <property type="entry name" value="tRNA_SAD"/>
    <property type="match status" value="1"/>
</dbReference>
<dbReference type="PRINTS" id="PR00980">
    <property type="entry name" value="TRNASYNTHALA"/>
</dbReference>
<dbReference type="SMART" id="SM00863">
    <property type="entry name" value="tRNA_SAD"/>
    <property type="match status" value="1"/>
</dbReference>
<dbReference type="SUPFAM" id="SSF55681">
    <property type="entry name" value="Class II aaRS and biotin synthetases"/>
    <property type="match status" value="1"/>
</dbReference>
<dbReference type="SUPFAM" id="SSF101353">
    <property type="entry name" value="Putative anticodon-binding domain of alanyl-tRNA synthetase (AlaRS)"/>
    <property type="match status" value="1"/>
</dbReference>
<dbReference type="SUPFAM" id="SSF55186">
    <property type="entry name" value="ThrRS/AlaRS common domain"/>
    <property type="match status" value="1"/>
</dbReference>
<dbReference type="SUPFAM" id="SSF50447">
    <property type="entry name" value="Translation proteins"/>
    <property type="match status" value="1"/>
</dbReference>
<dbReference type="PROSITE" id="PS50860">
    <property type="entry name" value="AA_TRNA_LIGASE_II_ALA"/>
    <property type="match status" value="1"/>
</dbReference>
<protein>
    <recommendedName>
        <fullName evidence="1">Alanine--tRNA ligase</fullName>
        <ecNumber evidence="1">6.1.1.7</ecNumber>
    </recommendedName>
    <alternativeName>
        <fullName evidence="1">Alanyl-tRNA synthetase</fullName>
        <shortName evidence="1">AlaRS</shortName>
    </alternativeName>
</protein>
<feature type="chain" id="PRO_0000075124" description="Alanine--tRNA ligase">
    <location>
        <begin position="1"/>
        <end position="892"/>
    </location>
</feature>
<feature type="binding site" evidence="1">
    <location>
        <position position="593"/>
    </location>
    <ligand>
        <name>Zn(2+)</name>
        <dbReference type="ChEBI" id="CHEBI:29105"/>
    </ligand>
</feature>
<feature type="binding site" evidence="1">
    <location>
        <position position="597"/>
    </location>
    <ligand>
        <name>Zn(2+)</name>
        <dbReference type="ChEBI" id="CHEBI:29105"/>
    </ligand>
</feature>
<feature type="binding site" evidence="1">
    <location>
        <position position="694"/>
    </location>
    <ligand>
        <name>Zn(2+)</name>
        <dbReference type="ChEBI" id="CHEBI:29105"/>
    </ligand>
</feature>
<feature type="binding site" evidence="1">
    <location>
        <position position="698"/>
    </location>
    <ligand>
        <name>Zn(2+)</name>
        <dbReference type="ChEBI" id="CHEBI:29105"/>
    </ligand>
</feature>